<dbReference type="EMBL" id="AC011806">
    <property type="protein sequence ID" value="AAK53837.1"/>
    <property type="molecule type" value="Genomic_DNA"/>
</dbReference>
<dbReference type="EMBL" id="AP003236">
    <property type="protein sequence ID" value="BAB64731.1"/>
    <property type="molecule type" value="Genomic_DNA"/>
</dbReference>
<dbReference type="EMBL" id="AP003281">
    <property type="protein sequence ID" value="BAB64761.1"/>
    <property type="molecule type" value="Genomic_DNA"/>
</dbReference>
<dbReference type="EMBL" id="AP006530">
    <property type="protein sequence ID" value="BAD88356.1"/>
    <property type="molecule type" value="Genomic_DNA"/>
</dbReference>
<dbReference type="EMBL" id="AP008247">
    <property type="protein sequence ID" value="BAD89485.1"/>
    <property type="molecule type" value="Genomic_DNA"/>
</dbReference>
<dbReference type="EMBL" id="AP008207">
    <property type="protein sequence ID" value="BAF04961.1"/>
    <property type="molecule type" value="Genomic_DNA"/>
</dbReference>
<dbReference type="EMBL" id="AP014957">
    <property type="protein sequence ID" value="BAS72158.1"/>
    <property type="molecule type" value="Genomic_DNA"/>
</dbReference>
<dbReference type="EMBL" id="CM000138">
    <property type="protein sequence ID" value="EAZ11913.1"/>
    <property type="molecule type" value="Genomic_DNA"/>
</dbReference>
<dbReference type="EMBL" id="AK107858">
    <property type="status" value="NOT_ANNOTATED_CDS"/>
    <property type="molecule type" value="mRNA"/>
</dbReference>
<dbReference type="RefSeq" id="XP_015642996.1">
    <property type="nucleotide sequence ID" value="XM_015787510.1"/>
</dbReference>
<dbReference type="SMR" id="Q7G8Y5"/>
<dbReference type="FunCoup" id="Q7G8Y5">
    <property type="interactions" value="23"/>
</dbReference>
<dbReference type="STRING" id="39947.Q7G8Y5"/>
<dbReference type="PaxDb" id="39947-Q7G8Y5"/>
<dbReference type="EnsemblPlants" id="Os01t0368900-01">
    <property type="protein sequence ID" value="Os01t0368900-01"/>
    <property type="gene ID" value="Os01g0368900"/>
</dbReference>
<dbReference type="Gramene" id="Os01t0368900-01">
    <property type="protein sequence ID" value="Os01t0368900-01"/>
    <property type="gene ID" value="Os01g0368900"/>
</dbReference>
<dbReference type="KEGG" id="dosa:Os01g0368900"/>
<dbReference type="eggNOG" id="KOG1752">
    <property type="taxonomic scope" value="Eukaryota"/>
</dbReference>
<dbReference type="HOGENOM" id="CLU_026126_6_0_1"/>
<dbReference type="InParanoid" id="Q7G8Y5"/>
<dbReference type="OrthoDB" id="418495at2759"/>
<dbReference type="Proteomes" id="UP000000763">
    <property type="component" value="Chromosome 1"/>
</dbReference>
<dbReference type="Proteomes" id="UP000007752">
    <property type="component" value="Chromosome 1"/>
</dbReference>
<dbReference type="Proteomes" id="UP000059680">
    <property type="component" value="Chromosome 1"/>
</dbReference>
<dbReference type="GO" id="GO:0005737">
    <property type="term" value="C:cytoplasm"/>
    <property type="evidence" value="ECO:0007669"/>
    <property type="project" value="UniProtKB-SubCell"/>
</dbReference>
<dbReference type="CDD" id="cd03419">
    <property type="entry name" value="GRX_GRXh_1_2_like"/>
    <property type="match status" value="1"/>
</dbReference>
<dbReference type="FunFam" id="3.40.30.10:FF:000028">
    <property type="entry name" value="Glutaredoxin family protein"/>
    <property type="match status" value="1"/>
</dbReference>
<dbReference type="Gene3D" id="3.40.30.10">
    <property type="entry name" value="Glutaredoxin"/>
    <property type="match status" value="1"/>
</dbReference>
<dbReference type="InterPro" id="IPR011905">
    <property type="entry name" value="GlrX-like_pln_2"/>
</dbReference>
<dbReference type="InterPro" id="IPR002109">
    <property type="entry name" value="Glutaredoxin"/>
</dbReference>
<dbReference type="InterPro" id="IPR036249">
    <property type="entry name" value="Thioredoxin-like_sf"/>
</dbReference>
<dbReference type="NCBIfam" id="TIGR02189">
    <property type="entry name" value="GlrX-like_plant"/>
    <property type="match status" value="1"/>
</dbReference>
<dbReference type="PANTHER" id="PTHR10168">
    <property type="entry name" value="GLUTAREDOXIN"/>
    <property type="match status" value="1"/>
</dbReference>
<dbReference type="Pfam" id="PF00462">
    <property type="entry name" value="Glutaredoxin"/>
    <property type="match status" value="1"/>
</dbReference>
<dbReference type="SUPFAM" id="SSF52833">
    <property type="entry name" value="Thioredoxin-like"/>
    <property type="match status" value="1"/>
</dbReference>
<dbReference type="PROSITE" id="PS51354">
    <property type="entry name" value="GLUTAREDOXIN_2"/>
    <property type="match status" value="1"/>
</dbReference>
<reference key="1">
    <citation type="submission" date="2001-08" db="EMBL/GenBank/DDBJ databases">
        <title>Genomic sequence for Oryza sativa clone 10P20, Lemont strain, complete sequence.</title>
        <authorList>
            <person name="Huang E.N."/>
            <person name="de la Bastide M."/>
            <person name="Vil D.M."/>
            <person name="Preston R.R."/>
            <person name="Spiegel L.A."/>
            <person name="See L.H."/>
            <person name="Shah R."/>
            <person name="Matero A."/>
            <person name="O'Shaughnessy A."/>
            <person name="Rodriguez M."/>
            <person name="Shekher M."/>
            <person name="Swaby I."/>
            <person name="Schutz K."/>
            <person name="Habermann K."/>
            <person name="Parnell L.D."/>
            <person name="Nascimento L.U."/>
            <person name="Dedhia N.N."/>
            <person name="McCombie W.R."/>
        </authorList>
    </citation>
    <scope>NUCLEOTIDE SEQUENCE [GENOMIC DNA]</scope>
    <source>
        <strain>cv. Lemont</strain>
    </source>
</reference>
<reference key="2">
    <citation type="journal article" date="2002" name="Nature">
        <title>The genome sequence and structure of rice chromosome 1.</title>
        <authorList>
            <person name="Sasaki T."/>
            <person name="Matsumoto T."/>
            <person name="Yamamoto K."/>
            <person name="Sakata K."/>
            <person name="Baba T."/>
            <person name="Katayose Y."/>
            <person name="Wu J."/>
            <person name="Niimura Y."/>
            <person name="Cheng Z."/>
            <person name="Nagamura Y."/>
            <person name="Antonio B.A."/>
            <person name="Kanamori H."/>
            <person name="Hosokawa S."/>
            <person name="Masukawa M."/>
            <person name="Arikawa K."/>
            <person name="Chiden Y."/>
            <person name="Hayashi M."/>
            <person name="Okamoto M."/>
            <person name="Ando T."/>
            <person name="Aoki H."/>
            <person name="Arita K."/>
            <person name="Hamada M."/>
            <person name="Harada C."/>
            <person name="Hijishita S."/>
            <person name="Honda M."/>
            <person name="Ichikawa Y."/>
            <person name="Idonuma A."/>
            <person name="Iijima M."/>
            <person name="Ikeda M."/>
            <person name="Ikeno M."/>
            <person name="Ito S."/>
            <person name="Ito T."/>
            <person name="Ito Y."/>
            <person name="Ito Y."/>
            <person name="Iwabuchi A."/>
            <person name="Kamiya K."/>
            <person name="Karasawa W."/>
            <person name="Katagiri S."/>
            <person name="Kikuta A."/>
            <person name="Kobayashi N."/>
            <person name="Kono I."/>
            <person name="Machita K."/>
            <person name="Maehara T."/>
            <person name="Mizuno H."/>
            <person name="Mizubayashi T."/>
            <person name="Mukai Y."/>
            <person name="Nagasaki H."/>
            <person name="Nakashima M."/>
            <person name="Nakama Y."/>
            <person name="Nakamichi Y."/>
            <person name="Nakamura M."/>
            <person name="Namiki N."/>
            <person name="Negishi M."/>
            <person name="Ohta I."/>
            <person name="Ono N."/>
            <person name="Saji S."/>
            <person name="Sakai K."/>
            <person name="Shibata M."/>
            <person name="Shimokawa T."/>
            <person name="Shomura A."/>
            <person name="Song J."/>
            <person name="Takazaki Y."/>
            <person name="Terasawa K."/>
            <person name="Tsuji K."/>
            <person name="Waki K."/>
            <person name="Yamagata H."/>
            <person name="Yamane H."/>
            <person name="Yoshiki S."/>
            <person name="Yoshihara R."/>
            <person name="Yukawa K."/>
            <person name="Zhong H."/>
            <person name="Iwama H."/>
            <person name="Endo T."/>
            <person name="Ito H."/>
            <person name="Hahn J.H."/>
            <person name="Kim H.-I."/>
            <person name="Eun M.-Y."/>
            <person name="Yano M."/>
            <person name="Jiang J."/>
            <person name="Gojobori T."/>
        </authorList>
    </citation>
    <scope>NUCLEOTIDE SEQUENCE [LARGE SCALE GENOMIC DNA]</scope>
    <source>
        <strain>cv. Nipponbare</strain>
    </source>
</reference>
<reference key="3">
    <citation type="journal article" date="2005" name="Nature">
        <title>The map-based sequence of the rice genome.</title>
        <authorList>
            <consortium name="International rice genome sequencing project (IRGSP)"/>
        </authorList>
    </citation>
    <scope>NUCLEOTIDE SEQUENCE [LARGE SCALE GENOMIC DNA]</scope>
    <source>
        <strain>cv. Nipponbare</strain>
    </source>
</reference>
<reference key="4">
    <citation type="journal article" date="2008" name="Nucleic Acids Res.">
        <title>The rice annotation project database (RAP-DB): 2008 update.</title>
        <authorList>
            <consortium name="The rice annotation project (RAP)"/>
        </authorList>
    </citation>
    <scope>GENOME REANNOTATION</scope>
    <source>
        <strain>cv. Nipponbare</strain>
    </source>
</reference>
<reference key="5">
    <citation type="journal article" date="2013" name="Rice">
        <title>Improvement of the Oryza sativa Nipponbare reference genome using next generation sequence and optical map data.</title>
        <authorList>
            <person name="Kawahara Y."/>
            <person name="de la Bastide M."/>
            <person name="Hamilton J.P."/>
            <person name="Kanamori H."/>
            <person name="McCombie W.R."/>
            <person name="Ouyang S."/>
            <person name="Schwartz D.C."/>
            <person name="Tanaka T."/>
            <person name="Wu J."/>
            <person name="Zhou S."/>
            <person name="Childs K.L."/>
            <person name="Davidson R.M."/>
            <person name="Lin H."/>
            <person name="Quesada-Ocampo L."/>
            <person name="Vaillancourt B."/>
            <person name="Sakai H."/>
            <person name="Lee S.S."/>
            <person name="Kim J."/>
            <person name="Numa H."/>
            <person name="Itoh T."/>
            <person name="Buell C.R."/>
            <person name="Matsumoto T."/>
        </authorList>
    </citation>
    <scope>GENOME REANNOTATION</scope>
    <source>
        <strain>cv. Nipponbare</strain>
    </source>
</reference>
<reference key="6">
    <citation type="journal article" date="2005" name="PLoS Biol.">
        <title>The genomes of Oryza sativa: a history of duplications.</title>
        <authorList>
            <person name="Yu J."/>
            <person name="Wang J."/>
            <person name="Lin W."/>
            <person name="Li S."/>
            <person name="Li H."/>
            <person name="Zhou J."/>
            <person name="Ni P."/>
            <person name="Dong W."/>
            <person name="Hu S."/>
            <person name="Zeng C."/>
            <person name="Zhang J."/>
            <person name="Zhang Y."/>
            <person name="Li R."/>
            <person name="Xu Z."/>
            <person name="Li S."/>
            <person name="Li X."/>
            <person name="Zheng H."/>
            <person name="Cong L."/>
            <person name="Lin L."/>
            <person name="Yin J."/>
            <person name="Geng J."/>
            <person name="Li G."/>
            <person name="Shi J."/>
            <person name="Liu J."/>
            <person name="Lv H."/>
            <person name="Li J."/>
            <person name="Wang J."/>
            <person name="Deng Y."/>
            <person name="Ran L."/>
            <person name="Shi X."/>
            <person name="Wang X."/>
            <person name="Wu Q."/>
            <person name="Li C."/>
            <person name="Ren X."/>
            <person name="Wang J."/>
            <person name="Wang X."/>
            <person name="Li D."/>
            <person name="Liu D."/>
            <person name="Zhang X."/>
            <person name="Ji Z."/>
            <person name="Zhao W."/>
            <person name="Sun Y."/>
            <person name="Zhang Z."/>
            <person name="Bao J."/>
            <person name="Han Y."/>
            <person name="Dong L."/>
            <person name="Ji J."/>
            <person name="Chen P."/>
            <person name="Wu S."/>
            <person name="Liu J."/>
            <person name="Xiao Y."/>
            <person name="Bu D."/>
            <person name="Tan J."/>
            <person name="Yang L."/>
            <person name="Ye C."/>
            <person name="Zhang J."/>
            <person name="Xu J."/>
            <person name="Zhou Y."/>
            <person name="Yu Y."/>
            <person name="Zhang B."/>
            <person name="Zhuang S."/>
            <person name="Wei H."/>
            <person name="Liu B."/>
            <person name="Lei M."/>
            <person name="Yu H."/>
            <person name="Li Y."/>
            <person name="Xu H."/>
            <person name="Wei S."/>
            <person name="He X."/>
            <person name="Fang L."/>
            <person name="Zhang Z."/>
            <person name="Zhang Y."/>
            <person name="Huang X."/>
            <person name="Su Z."/>
            <person name="Tong W."/>
            <person name="Li J."/>
            <person name="Tong Z."/>
            <person name="Li S."/>
            <person name="Ye J."/>
            <person name="Wang L."/>
            <person name="Fang L."/>
            <person name="Lei T."/>
            <person name="Chen C.-S."/>
            <person name="Chen H.-C."/>
            <person name="Xu Z."/>
            <person name="Li H."/>
            <person name="Huang H."/>
            <person name="Zhang F."/>
            <person name="Xu H."/>
            <person name="Li N."/>
            <person name="Zhao C."/>
            <person name="Li S."/>
            <person name="Dong L."/>
            <person name="Huang Y."/>
            <person name="Li L."/>
            <person name="Xi Y."/>
            <person name="Qi Q."/>
            <person name="Li W."/>
            <person name="Zhang B."/>
            <person name="Hu W."/>
            <person name="Zhang Y."/>
            <person name="Tian X."/>
            <person name="Jiao Y."/>
            <person name="Liang X."/>
            <person name="Jin J."/>
            <person name="Gao L."/>
            <person name="Zheng W."/>
            <person name="Hao B."/>
            <person name="Liu S.-M."/>
            <person name="Wang W."/>
            <person name="Yuan L."/>
            <person name="Cao M."/>
            <person name="McDermott J."/>
            <person name="Samudrala R."/>
            <person name="Wang J."/>
            <person name="Wong G.K.-S."/>
            <person name="Yang H."/>
        </authorList>
    </citation>
    <scope>NUCLEOTIDE SEQUENCE [LARGE SCALE GENOMIC DNA]</scope>
    <source>
        <strain>cv. Nipponbare</strain>
    </source>
</reference>
<reference key="7">
    <citation type="journal article" date="2003" name="Science">
        <title>Collection, mapping, and annotation of over 28,000 cDNA clones from japonica rice.</title>
        <authorList>
            <consortium name="The rice full-length cDNA consortium"/>
        </authorList>
    </citation>
    <scope>NUCLEOTIDE SEQUENCE [LARGE SCALE MRNA]</scope>
    <source>
        <strain>cv. Nipponbare</strain>
    </source>
</reference>
<reference key="8">
    <citation type="journal article" date="2006" name="J. Exp. Bot.">
        <title>Genome-wide analysis of plant glutaredoxin systems.</title>
        <authorList>
            <person name="Rouhier N."/>
            <person name="Couturier J."/>
            <person name="Jacquot J.-P."/>
        </authorList>
    </citation>
    <scope>GENE FAMILY</scope>
</reference>
<evidence type="ECO:0000250" key="1"/>
<evidence type="ECO:0000255" key="2">
    <source>
        <dbReference type="PROSITE-ProRule" id="PRU00686"/>
    </source>
</evidence>
<evidence type="ECO:0000305" key="3"/>
<evidence type="ECO:0000312" key="4">
    <source>
        <dbReference type="EMBL" id="EAZ11913.1"/>
    </source>
</evidence>
<protein>
    <recommendedName>
        <fullName>Glutaredoxin-C1</fullName>
    </recommendedName>
</protein>
<name>GRXC1_ORYSJ</name>
<accession>Q7G8Y5</accession>
<accession>A2ZT66</accession>
<accession>Q93VF3</accession>
<comment type="function">
    <text evidence="1">Has a glutathione-disulfide oxidoreductase activity in the presence of NADPH and glutathione reductase. Reduces low molecular weight disulfides and proteins (By similarity).</text>
</comment>
<comment type="subcellular location">
    <subcellularLocation>
        <location evidence="1">Cytoplasm</location>
    </subcellularLocation>
</comment>
<comment type="similarity">
    <text evidence="3">Belongs to the glutaredoxin family. CC-type subfamily.</text>
</comment>
<proteinExistence type="inferred from homology"/>
<organism>
    <name type="scientific">Oryza sativa subsp. japonica</name>
    <name type="common">Rice</name>
    <dbReference type="NCBI Taxonomy" id="39947"/>
    <lineage>
        <taxon>Eukaryota</taxon>
        <taxon>Viridiplantae</taxon>
        <taxon>Streptophyta</taxon>
        <taxon>Embryophyta</taxon>
        <taxon>Tracheophyta</taxon>
        <taxon>Spermatophyta</taxon>
        <taxon>Magnoliopsida</taxon>
        <taxon>Liliopsida</taxon>
        <taxon>Poales</taxon>
        <taxon>Poaceae</taxon>
        <taxon>BOP clade</taxon>
        <taxon>Oryzoideae</taxon>
        <taxon>Oryzeae</taxon>
        <taxon>Oryzinae</taxon>
        <taxon>Oryza</taxon>
        <taxon>Oryza sativa</taxon>
    </lineage>
</organism>
<keyword id="KW-0963">Cytoplasm</keyword>
<keyword id="KW-1015">Disulfide bond</keyword>
<keyword id="KW-0249">Electron transport</keyword>
<keyword id="KW-0676">Redox-active center</keyword>
<keyword id="KW-1185">Reference proteome</keyword>
<keyword id="KW-0813">Transport</keyword>
<feature type="chain" id="PRO_0000269663" description="Glutaredoxin-C1">
    <location>
        <begin position="1"/>
        <end position="103"/>
    </location>
</feature>
<feature type="domain" description="Glutaredoxin" evidence="2">
    <location>
        <begin position="1"/>
        <end position="102"/>
    </location>
</feature>
<feature type="disulfide bond" description="Redox-active" evidence="1">
    <location>
        <begin position="21"/>
        <end position="24"/>
    </location>
</feature>
<gene>
    <name type="primary">GRXC1</name>
    <name type="ordered locus">Os01g0368900</name>
    <name type="ordered locus">LOC_Os01g27140</name>
    <name type="ORF">B1329D01.42</name>
    <name evidence="4" type="ORF">OsJ_01785</name>
    <name type="ORF">P0043B10.28</name>
    <name type="ORF">P0560B06.28</name>
    <name type="ORF">P0784G04.35</name>
</gene>
<sequence>MDRVNRLAAQRAVVIFSMSSCCMCHTVTRLFCELGVNPTVVELDEDPRGKEMEKALARLLGRSPAVPAVFIGGRLVGSTDKVMSLHLSGNLVPLLRNAGALWV</sequence>